<feature type="chain" id="PRO_0000135124" description="Alkyl hydroperoxide reductase C">
    <location>
        <begin position="1"/>
        <end position="189"/>
    </location>
</feature>
<feature type="domain" description="Thioredoxin" evidence="3">
    <location>
        <begin position="2"/>
        <end position="159"/>
    </location>
</feature>
<feature type="active site" description="Cysteine sulfenic acid (-SOH) intermediate" evidence="1">
    <location>
        <position position="49"/>
    </location>
</feature>
<feature type="disulfide bond" description="Interchain (with C-168); in linked form" evidence="1">
    <location>
        <position position="49"/>
    </location>
</feature>
<feature type="disulfide bond" description="Interchain (with C-49); in linked form" evidence="1">
    <location>
        <position position="168"/>
    </location>
</feature>
<organism>
    <name type="scientific">Staphylococcus aureus (strain N315)</name>
    <dbReference type="NCBI Taxonomy" id="158879"/>
    <lineage>
        <taxon>Bacteria</taxon>
        <taxon>Bacillati</taxon>
        <taxon>Bacillota</taxon>
        <taxon>Bacilli</taxon>
        <taxon>Bacillales</taxon>
        <taxon>Staphylococcaceae</taxon>
        <taxon>Staphylococcus</taxon>
    </lineage>
</organism>
<dbReference type="EC" id="1.11.1.26" evidence="1"/>
<dbReference type="EMBL" id="BA000018">
    <property type="protein sequence ID" value="BAB41593.1"/>
    <property type="molecule type" value="Genomic_DNA"/>
</dbReference>
<dbReference type="PIR" id="F89804">
    <property type="entry name" value="F89804"/>
</dbReference>
<dbReference type="RefSeq" id="WP_000052781.1">
    <property type="nucleotide sequence ID" value="NC_002745.2"/>
</dbReference>
<dbReference type="SMR" id="P99074"/>
<dbReference type="EnsemblBacteria" id="BAB41593">
    <property type="protein sequence ID" value="BAB41593"/>
    <property type="gene ID" value="BAB41593"/>
</dbReference>
<dbReference type="KEGG" id="sau:SA0366"/>
<dbReference type="HOGENOM" id="CLU_042529_21_3_9"/>
<dbReference type="GO" id="GO:0005829">
    <property type="term" value="C:cytosol"/>
    <property type="evidence" value="ECO:0007669"/>
    <property type="project" value="TreeGrafter"/>
</dbReference>
<dbReference type="GO" id="GO:0102039">
    <property type="term" value="F:NADH-dependent peroxiredoxin activity"/>
    <property type="evidence" value="ECO:0007669"/>
    <property type="project" value="UniProtKB-EC"/>
</dbReference>
<dbReference type="GO" id="GO:0008379">
    <property type="term" value="F:thioredoxin peroxidase activity"/>
    <property type="evidence" value="ECO:0007669"/>
    <property type="project" value="TreeGrafter"/>
</dbReference>
<dbReference type="GO" id="GO:0045454">
    <property type="term" value="P:cell redox homeostasis"/>
    <property type="evidence" value="ECO:0007669"/>
    <property type="project" value="TreeGrafter"/>
</dbReference>
<dbReference type="GO" id="GO:0033554">
    <property type="term" value="P:cellular response to stress"/>
    <property type="evidence" value="ECO:0007669"/>
    <property type="project" value="TreeGrafter"/>
</dbReference>
<dbReference type="GO" id="GO:0042744">
    <property type="term" value="P:hydrogen peroxide catabolic process"/>
    <property type="evidence" value="ECO:0007669"/>
    <property type="project" value="TreeGrafter"/>
</dbReference>
<dbReference type="GO" id="GO:0006979">
    <property type="term" value="P:response to oxidative stress"/>
    <property type="evidence" value="ECO:0007669"/>
    <property type="project" value="InterPro"/>
</dbReference>
<dbReference type="CDD" id="cd03015">
    <property type="entry name" value="PRX_Typ2cys"/>
    <property type="match status" value="1"/>
</dbReference>
<dbReference type="FunFam" id="3.40.30.10:FF:000002">
    <property type="entry name" value="Alkyl hydroperoxide reductase C"/>
    <property type="match status" value="1"/>
</dbReference>
<dbReference type="Gene3D" id="3.40.30.10">
    <property type="entry name" value="Glutaredoxin"/>
    <property type="match status" value="1"/>
</dbReference>
<dbReference type="InterPro" id="IPR017559">
    <property type="entry name" value="AhpC"/>
</dbReference>
<dbReference type="InterPro" id="IPR000866">
    <property type="entry name" value="AhpC/TSA"/>
</dbReference>
<dbReference type="InterPro" id="IPR050217">
    <property type="entry name" value="Peroxiredoxin"/>
</dbReference>
<dbReference type="InterPro" id="IPR024706">
    <property type="entry name" value="Peroxiredoxin_AhpC-typ"/>
</dbReference>
<dbReference type="InterPro" id="IPR019479">
    <property type="entry name" value="Peroxiredoxin_C"/>
</dbReference>
<dbReference type="InterPro" id="IPR036249">
    <property type="entry name" value="Thioredoxin-like_sf"/>
</dbReference>
<dbReference type="InterPro" id="IPR013766">
    <property type="entry name" value="Thioredoxin_domain"/>
</dbReference>
<dbReference type="NCBIfam" id="TIGR03137">
    <property type="entry name" value="AhpC"/>
    <property type="match status" value="1"/>
</dbReference>
<dbReference type="PANTHER" id="PTHR10681:SF121">
    <property type="entry name" value="ALKYL HYDROPEROXIDE REDUCTASE C"/>
    <property type="match status" value="1"/>
</dbReference>
<dbReference type="PANTHER" id="PTHR10681">
    <property type="entry name" value="THIOREDOXIN PEROXIDASE"/>
    <property type="match status" value="1"/>
</dbReference>
<dbReference type="Pfam" id="PF10417">
    <property type="entry name" value="1-cysPrx_C"/>
    <property type="match status" value="1"/>
</dbReference>
<dbReference type="Pfam" id="PF00578">
    <property type="entry name" value="AhpC-TSA"/>
    <property type="match status" value="1"/>
</dbReference>
<dbReference type="PIRSF" id="PIRSF000239">
    <property type="entry name" value="AHPC"/>
    <property type="match status" value="1"/>
</dbReference>
<dbReference type="SUPFAM" id="SSF52833">
    <property type="entry name" value="Thioredoxin-like"/>
    <property type="match status" value="1"/>
</dbReference>
<dbReference type="PROSITE" id="PS51352">
    <property type="entry name" value="THIOREDOXIN_2"/>
    <property type="match status" value="1"/>
</dbReference>
<gene>
    <name type="primary">ahpC</name>
    <name type="ordered locus">SA0366</name>
</gene>
<accession>P99074</accession>
<accession>Q53647</accession>
<name>AHPC_STAAN</name>
<sequence length="189" mass="20977">MSLINKEILPFTAQAFDPKKDQFKEVTQEDLKGSWSVVCFYPADFSFVCPTELEDLQNQYEELQKLGVNVFSVSTDTHFVHKAWHDHSDAISKITYTMIGDPSQTITRNFDVLDEATGLAQRGTFIIDPDGVVQASEINADGIGRDASTLAHKIKAAQYVRKNPGEVCPAKWEEGAKTLQPGLDLVGKI</sequence>
<reference key="1">
    <citation type="journal article" date="2001" name="Lancet">
        <title>Whole genome sequencing of meticillin-resistant Staphylococcus aureus.</title>
        <authorList>
            <person name="Kuroda M."/>
            <person name="Ohta T."/>
            <person name="Uchiyama I."/>
            <person name="Baba T."/>
            <person name="Yuzawa H."/>
            <person name="Kobayashi I."/>
            <person name="Cui L."/>
            <person name="Oguchi A."/>
            <person name="Aoki K."/>
            <person name="Nagai Y."/>
            <person name="Lian J.-Q."/>
            <person name="Ito T."/>
            <person name="Kanamori M."/>
            <person name="Matsumaru H."/>
            <person name="Maruyama A."/>
            <person name="Murakami H."/>
            <person name="Hosoyama A."/>
            <person name="Mizutani-Ui Y."/>
            <person name="Takahashi N.K."/>
            <person name="Sawano T."/>
            <person name="Inoue R."/>
            <person name="Kaito C."/>
            <person name="Sekimizu K."/>
            <person name="Hirakawa H."/>
            <person name="Kuhara S."/>
            <person name="Goto S."/>
            <person name="Yabuzaki J."/>
            <person name="Kanehisa M."/>
            <person name="Yamashita A."/>
            <person name="Oshima K."/>
            <person name="Furuya K."/>
            <person name="Yoshino C."/>
            <person name="Shiba T."/>
            <person name="Hattori M."/>
            <person name="Ogasawara N."/>
            <person name="Hayashi H."/>
            <person name="Hiramatsu K."/>
        </authorList>
    </citation>
    <scope>NUCLEOTIDE SEQUENCE [LARGE SCALE GENOMIC DNA]</scope>
    <source>
        <strain>N315</strain>
    </source>
</reference>
<reference key="2">
    <citation type="journal article" date="2005" name="J. Microbiol. Methods">
        <title>Correlation of proteomic and transcriptomic profiles of Staphylococcus aureus during the post-exponential phase of growth.</title>
        <authorList>
            <person name="Scherl A."/>
            <person name="Francois P."/>
            <person name="Bento M."/>
            <person name="Deshusses J.M."/>
            <person name="Charbonnier Y."/>
            <person name="Converset V."/>
            <person name="Huyghe A."/>
            <person name="Walter N."/>
            <person name="Hoogland C."/>
            <person name="Appel R.D."/>
            <person name="Sanchez J.-C."/>
            <person name="Zimmermann-Ivol C.G."/>
            <person name="Corthals G.L."/>
            <person name="Hochstrasser D.F."/>
            <person name="Schrenzel J."/>
        </authorList>
    </citation>
    <scope>IDENTIFICATION BY MASS SPECTROMETRY</scope>
    <source>
        <strain>N315</strain>
    </source>
</reference>
<reference key="3">
    <citation type="submission" date="2007-10" db="UniProtKB">
        <title>Shotgun proteomic analysis of total and membrane protein extracts of S. aureus strain N315.</title>
        <authorList>
            <person name="Vaezzadeh A.R."/>
            <person name="Deshusses J."/>
            <person name="Lescuyer P."/>
            <person name="Hochstrasser D.F."/>
        </authorList>
    </citation>
    <scope>IDENTIFICATION BY MASS SPECTROMETRY [LARGE SCALE ANALYSIS]</scope>
    <source>
        <strain>N315</strain>
    </source>
</reference>
<proteinExistence type="evidence at protein level"/>
<evidence type="ECO:0000250" key="1">
    <source>
        <dbReference type="UniProtKB" id="P0A251"/>
    </source>
</evidence>
<evidence type="ECO:0000250" key="2">
    <source>
        <dbReference type="UniProtKB" id="P0AE08"/>
    </source>
</evidence>
<evidence type="ECO:0000255" key="3">
    <source>
        <dbReference type="PROSITE-ProRule" id="PRU00691"/>
    </source>
</evidence>
<evidence type="ECO:0000305" key="4"/>
<keyword id="KW-0049">Antioxidant</keyword>
<keyword id="KW-0963">Cytoplasm</keyword>
<keyword id="KW-1015">Disulfide bond</keyword>
<keyword id="KW-0560">Oxidoreductase</keyword>
<keyword id="KW-0575">Peroxidase</keyword>
<keyword id="KW-0676">Redox-active center</keyword>
<comment type="function">
    <text evidence="1">Thiol-specific peroxidase that catalyzes the reduction of hydrogen peroxide and organic hydroperoxides to water and alcohols, respectively. Plays a role in cell protection against oxidative stress by detoxifying peroxides.</text>
</comment>
<comment type="catalytic activity">
    <reaction evidence="1">
        <text>a hydroperoxide + NADH + H(+) = an alcohol + NAD(+) + H2O</text>
        <dbReference type="Rhea" id="RHEA:62628"/>
        <dbReference type="ChEBI" id="CHEBI:15377"/>
        <dbReference type="ChEBI" id="CHEBI:15378"/>
        <dbReference type="ChEBI" id="CHEBI:30879"/>
        <dbReference type="ChEBI" id="CHEBI:35924"/>
        <dbReference type="ChEBI" id="CHEBI:57540"/>
        <dbReference type="ChEBI" id="CHEBI:57945"/>
        <dbReference type="EC" id="1.11.1.26"/>
    </reaction>
</comment>
<comment type="subunit">
    <text evidence="1">Homodimer; disulfide-linked, upon oxidation. 5 homodimers assemble to form a ring-like decamer.</text>
</comment>
<comment type="subcellular location">
    <subcellularLocation>
        <location evidence="2">Cytoplasm</location>
    </subcellularLocation>
</comment>
<comment type="miscellaneous">
    <text evidence="1">The active site is a conserved redox-active cysteine residue, the peroxidatic cysteine (C(P)), which makes the nucleophilic attack on the peroxide substrate. The peroxide oxidizes the C(P)-SH to cysteine sulfenic acid (C(P)-SOH), which then reacts with another cysteine residue, the resolving cysteine (C(R)), to form a disulfide bridge. The disulfide is subsequently reduced by an appropriate electron donor to complete the catalytic cycle. In this typical 2-Cys peroxiredoxin, C(R) is provided by the other dimeric subunit to form an intersubunit disulfide. The disulfide is subsequently reduced by AhpF.</text>
</comment>
<comment type="similarity">
    <text evidence="4">Belongs to the peroxiredoxin family. AhpC/Prx1 subfamily.</text>
</comment>
<protein>
    <recommendedName>
        <fullName>Alkyl hydroperoxide reductase C</fullName>
        <ecNumber evidence="1">1.11.1.26</ecNumber>
    </recommendedName>
    <alternativeName>
        <fullName>Peroxiredoxin</fullName>
    </alternativeName>
    <alternativeName>
        <fullName>Thioredoxin peroxidase</fullName>
    </alternativeName>
</protein>